<organism>
    <name type="scientific">Xenopus laevis</name>
    <name type="common">African clawed frog</name>
    <dbReference type="NCBI Taxonomy" id="8355"/>
    <lineage>
        <taxon>Eukaryota</taxon>
        <taxon>Metazoa</taxon>
        <taxon>Chordata</taxon>
        <taxon>Craniata</taxon>
        <taxon>Vertebrata</taxon>
        <taxon>Euteleostomi</taxon>
        <taxon>Amphibia</taxon>
        <taxon>Batrachia</taxon>
        <taxon>Anura</taxon>
        <taxon>Pipoidea</taxon>
        <taxon>Pipidae</taxon>
        <taxon>Xenopodinae</taxon>
        <taxon>Xenopus</taxon>
        <taxon>Xenopus</taxon>
    </lineage>
</organism>
<sequence>METEGLSPMLYEDDYYYGNETGLQPCDETDWDFSYSLLPVFYMIVFVLGLSGNGVVIFTVWKSKPKRRSADTYIGNLALADLAFVVTLPLWATYTALGFHWPFGSALCKLSSYLVLLNMFASVFCLTCLSFDRYLAIVHSLSSAKLRSRSSIIVSLAVIWLFSGLLALPSLILRDTRVEGNNTICDLDFSGVSSKENENFWIGGLSILTTVPGFLLPLLLMTIFYCFIGGKVTMHFQNLKKEEQKKKRLLKIIITLVVVFAICWLPFHILKTIHFLDLMGFLELSCSTQNIIVSLHPYATCLAYVNSCLNPFLYAFFDLRFRSQCFFFFGFKKVLQGHLSNTSSSLSAQTQKSEIHSLATKV</sequence>
<gene>
    <name type="primary">aplnr-a</name>
    <name type="synonym">agtrl1</name>
    <name type="synonym">agtrl1-a</name>
    <name type="synonym">agtrl1a</name>
    <name type="synonym">angio1</name>
    <name type="synonym">msr</name>
</gene>
<name>APJA_XENLA</name>
<comment type="function">
    <text evidence="1 2 3 6 7 8">G protein-coupled receptor for peptide hormones apelin (apln) and apelin receptor early endogenous ligand (apela), that plays a role in the regulation of normal cardiovascular function and fluid homeostasis. When acting as apelin receptor, activates both G(i) protein pathway that inhibits adenylate cyclase activity, and the beta-arrestin pathway that promotes internalization of the receptor (PubMed:16750822, PubMed:16876154, PubMed:17412318). Also functions as mechanoreceptor that is activated by pathological stimuli in a G-protein-independent fashion to induce beta-arrestin signaling, hence eliciting cardiac hypertrophy. However, the presence of apelin ligand blunts cardiac hypertrophic induction from APLNR/APJ on response to pathological stimuli (By similarity). Plays a key role in early development such as gastrulation, blood vessels formation and heart morphogenesis by acting as a receptor for apela hormone, promoting endoderm and mesendoderm cell migration and regulating the migration of cells fated to become myocardial progenitors, respectively (By similarity). Promotes angioblast migration toward the embryonic midline, i.e. the position of the future vessel formation, during vasculogenesis (By similarity). May promote sinus venosus (SV)-derived endothelial cells migration into the developing heart to promote coronary blood vessel development (By similarity). Required for cardiovascular development, particularly for intersomitic vein angiogenesis by acting as a receptor for apln hormone (PubMed:16750822, PubMed:16876154, PubMed:17412318). Also plays a role in various processes in adults such as regulation of blood vessel formation, blood pressure, heart contractility, and heart failure (By similarity). Acts upstream of the i/o type of G-alpha proteins in the differentiation of endothelium, erythroid cells, myeloid cells and cardiomyocytes (PubMed:16876154).</text>
</comment>
<comment type="subcellular location">
    <subcellularLocation>
        <location evidence="8">Cell membrane</location>
        <topology evidence="8">Multi-pass membrane protein</topology>
    </subcellularLocation>
    <text evidence="1 8">Internalized to the cytoplasm after exposure to apelin (apln) (PubMed:17412318). After exposure to apelin receptor early endogenous ligand (apela), internalized from the cell surface into an endosomal recycling compartment, from where it is recycled to the cell membrane (By similarity).</text>
</comment>
<comment type="tissue specificity">
    <text evidence="6 7 8 9">Expressed in all blood vessels including the posterior cardinal vein, intersomitic veins and the vitelline vein network. At the gastrula stage, exclusively expressed in the mesodermal layer and at the neurula stage in the lateral plate mesoderm. Larval expression is observed in the endothelium of the primary blood vessels and the forming heart.</text>
</comment>
<comment type="developmental stage">
    <text evidence="9">Expression starts in the late blastula (stage 8), increases during gastrulation and remains constant between neurula and larva stages.</text>
</comment>
<comment type="similarity">
    <text evidence="5">Belongs to the G-protein coupled receptor 1 family.</text>
</comment>
<comment type="sequence caution" evidence="10">
    <conflict type="erroneous termination">
        <sequence resource="EMBL-CDS" id="AAB17004"/>
    </conflict>
    <text>Truncated C-terminus.</text>
</comment>
<comment type="sequence caution" evidence="10">
    <conflict type="frameshift">
        <sequence resource="EMBL-CDS" id="AAI39487"/>
    </conflict>
</comment>
<comment type="sequence caution" evidence="10">
    <conflict type="frameshift">
        <sequence resource="EMBL-CDS" id="CAA63612"/>
    </conflict>
</comment>
<protein>
    <recommendedName>
        <fullName>Apelin receptor A</fullName>
    </recommendedName>
    <alternativeName>
        <fullName>Angiotensin receptor-like 1a</fullName>
        <shortName>xAngio1</shortName>
    </alternativeName>
    <alternativeName>
        <fullName>Angiotensin receptor-related protein A</fullName>
    </alternativeName>
    <alternativeName>
        <fullName>G-protein coupled receptor APJ-A</fullName>
        <shortName>APJa</shortName>
    </alternativeName>
    <alternativeName>
        <fullName>Mesenchyme-associated serpentine receptor</fullName>
        <shortName>x-MSR</shortName>
    </alternativeName>
</protein>
<dbReference type="EMBL" id="X93045">
    <property type="protein sequence ID" value="CAA63612.1"/>
    <property type="status" value="ALT_FRAME"/>
    <property type="molecule type" value="mRNA"/>
</dbReference>
<dbReference type="EMBL" id="U72029">
    <property type="protein sequence ID" value="AAB17004.1"/>
    <property type="status" value="ALT_SEQ"/>
    <property type="molecule type" value="mRNA"/>
</dbReference>
<dbReference type="EMBL" id="DQ473441">
    <property type="protein sequence ID" value="ABF19731.1"/>
    <property type="molecule type" value="mRNA"/>
</dbReference>
<dbReference type="EMBL" id="BC139486">
    <property type="protein sequence ID" value="AAI39487.1"/>
    <property type="status" value="ALT_FRAME"/>
    <property type="molecule type" value="mRNA"/>
</dbReference>
<dbReference type="RefSeq" id="NP_001084106.1">
    <property type="nucleotide sequence ID" value="NM_001090637.1"/>
</dbReference>
<dbReference type="SMR" id="P79960"/>
<dbReference type="GlyCosmos" id="P79960">
    <property type="glycosylation" value="2 sites, No reported glycans"/>
</dbReference>
<dbReference type="DNASU" id="399306"/>
<dbReference type="GeneID" id="399306"/>
<dbReference type="KEGG" id="xla:399306"/>
<dbReference type="AGR" id="Xenbase:XB-GENE-6254056"/>
<dbReference type="CTD" id="399306"/>
<dbReference type="Xenbase" id="XB-GENE-6254056">
    <property type="gene designation" value="aplnr.L"/>
</dbReference>
<dbReference type="OMA" id="WPSEAYL"/>
<dbReference type="OrthoDB" id="5974286at2759"/>
<dbReference type="Proteomes" id="UP000186698">
    <property type="component" value="Chromosome 1L"/>
</dbReference>
<dbReference type="Bgee" id="399306">
    <property type="expression patterns" value="Expressed in gastrula and 18 other cell types or tissues"/>
</dbReference>
<dbReference type="GO" id="GO:0005737">
    <property type="term" value="C:cytoplasm"/>
    <property type="evidence" value="ECO:0000314"/>
    <property type="project" value="UniProtKB"/>
</dbReference>
<dbReference type="GO" id="GO:0009897">
    <property type="term" value="C:external side of plasma membrane"/>
    <property type="evidence" value="ECO:0000318"/>
    <property type="project" value="GO_Central"/>
</dbReference>
<dbReference type="GO" id="GO:0005886">
    <property type="term" value="C:plasma membrane"/>
    <property type="evidence" value="ECO:0000314"/>
    <property type="project" value="UniProtKB"/>
</dbReference>
<dbReference type="GO" id="GO:0060182">
    <property type="term" value="F:apelin receptor activity"/>
    <property type="evidence" value="ECO:0000314"/>
    <property type="project" value="UniProtKB"/>
</dbReference>
<dbReference type="GO" id="GO:0019957">
    <property type="term" value="F:C-C chemokine binding"/>
    <property type="evidence" value="ECO:0000318"/>
    <property type="project" value="GO_Central"/>
</dbReference>
<dbReference type="GO" id="GO:0016493">
    <property type="term" value="F:C-C chemokine receptor activity"/>
    <property type="evidence" value="ECO:0000318"/>
    <property type="project" value="GO_Central"/>
</dbReference>
<dbReference type="GO" id="GO:0140897">
    <property type="term" value="F:mechanoreceptor activity"/>
    <property type="evidence" value="ECO:0000250"/>
    <property type="project" value="UniProtKB"/>
</dbReference>
<dbReference type="GO" id="GO:0001525">
    <property type="term" value="P:angiogenesis"/>
    <property type="evidence" value="ECO:0000315"/>
    <property type="project" value="UniProtKB"/>
</dbReference>
<dbReference type="GO" id="GO:0060183">
    <property type="term" value="P:apelin receptor signaling pathway"/>
    <property type="evidence" value="ECO:0000315"/>
    <property type="project" value="UniProtKB"/>
</dbReference>
<dbReference type="GO" id="GO:0001568">
    <property type="term" value="P:blood vessel development"/>
    <property type="evidence" value="ECO:0000315"/>
    <property type="project" value="UniProtKB"/>
</dbReference>
<dbReference type="GO" id="GO:0001569">
    <property type="term" value="P:branching involved in blood vessel morphogenesis"/>
    <property type="evidence" value="ECO:0000315"/>
    <property type="project" value="UniProtKB"/>
</dbReference>
<dbReference type="GO" id="GO:0019722">
    <property type="term" value="P:calcium-mediated signaling"/>
    <property type="evidence" value="ECO:0000318"/>
    <property type="project" value="GO_Central"/>
</dbReference>
<dbReference type="GO" id="GO:0030154">
    <property type="term" value="P:cell differentiation"/>
    <property type="evidence" value="ECO:0007669"/>
    <property type="project" value="UniProtKB-KW"/>
</dbReference>
<dbReference type="GO" id="GO:0007369">
    <property type="term" value="P:gastrulation"/>
    <property type="evidence" value="ECO:0007669"/>
    <property type="project" value="UniProtKB-KW"/>
</dbReference>
<dbReference type="GO" id="GO:0007507">
    <property type="term" value="P:heart development"/>
    <property type="evidence" value="ECO:0000250"/>
    <property type="project" value="UniProtKB"/>
</dbReference>
<dbReference type="GO" id="GO:0006955">
    <property type="term" value="P:immune response"/>
    <property type="evidence" value="ECO:0000318"/>
    <property type="project" value="GO_Central"/>
</dbReference>
<dbReference type="GO" id="GO:0043951">
    <property type="term" value="P:negative regulation of cAMP-mediated signaling"/>
    <property type="evidence" value="ECO:0000250"/>
    <property type="project" value="UniProtKB"/>
</dbReference>
<dbReference type="GO" id="GO:0030593">
    <property type="term" value="P:neutrophil chemotaxis"/>
    <property type="evidence" value="ECO:0000318"/>
    <property type="project" value="GO_Central"/>
</dbReference>
<dbReference type="GO" id="GO:0045766">
    <property type="term" value="P:positive regulation of angiogenesis"/>
    <property type="evidence" value="ECO:0000250"/>
    <property type="project" value="UniProtKB"/>
</dbReference>
<dbReference type="GO" id="GO:0007204">
    <property type="term" value="P:positive regulation of cytosolic calcium ion concentration"/>
    <property type="evidence" value="ECO:0000318"/>
    <property type="project" value="GO_Central"/>
</dbReference>
<dbReference type="GO" id="GO:0051281">
    <property type="term" value="P:positive regulation of release of sequestered calcium ion into cytosol"/>
    <property type="evidence" value="ECO:0000250"/>
    <property type="project" value="UniProtKB"/>
</dbReference>
<dbReference type="CDD" id="cd15190">
    <property type="entry name" value="7tmA_Apelin_R"/>
    <property type="match status" value="1"/>
</dbReference>
<dbReference type="FunFam" id="1.20.1070.10:FF:000106">
    <property type="entry name" value="Apelin receptor a"/>
    <property type="match status" value="1"/>
</dbReference>
<dbReference type="Gene3D" id="1.20.1070.10">
    <property type="entry name" value="Rhodopsin 7-helix transmembrane proteins"/>
    <property type="match status" value="1"/>
</dbReference>
<dbReference type="InterPro" id="IPR000248">
    <property type="entry name" value="ATII_rcpt"/>
</dbReference>
<dbReference type="InterPro" id="IPR050119">
    <property type="entry name" value="CCR1-9-like"/>
</dbReference>
<dbReference type="InterPro" id="IPR000276">
    <property type="entry name" value="GPCR_Rhodpsn"/>
</dbReference>
<dbReference type="InterPro" id="IPR017452">
    <property type="entry name" value="GPCR_Rhodpsn_7TM"/>
</dbReference>
<dbReference type="PANTHER" id="PTHR10489:SF953">
    <property type="entry name" value="APELIN RECEPTOR"/>
    <property type="match status" value="1"/>
</dbReference>
<dbReference type="PANTHER" id="PTHR10489">
    <property type="entry name" value="CELL ADHESION MOLECULE"/>
    <property type="match status" value="1"/>
</dbReference>
<dbReference type="Pfam" id="PF00001">
    <property type="entry name" value="7tm_1"/>
    <property type="match status" value="1"/>
</dbReference>
<dbReference type="PRINTS" id="PR00241">
    <property type="entry name" value="ANGIOTENSINR"/>
</dbReference>
<dbReference type="PRINTS" id="PR00237">
    <property type="entry name" value="GPCRRHODOPSN"/>
</dbReference>
<dbReference type="SUPFAM" id="SSF81321">
    <property type="entry name" value="Family A G protein-coupled receptor-like"/>
    <property type="match status" value="1"/>
</dbReference>
<dbReference type="PROSITE" id="PS00237">
    <property type="entry name" value="G_PROTEIN_RECEP_F1_1"/>
    <property type="match status" value="1"/>
</dbReference>
<dbReference type="PROSITE" id="PS50262">
    <property type="entry name" value="G_PROTEIN_RECEP_F1_2"/>
    <property type="match status" value="1"/>
</dbReference>
<keyword id="KW-0037">Angiogenesis</keyword>
<keyword id="KW-1003">Cell membrane</keyword>
<keyword id="KW-0217">Developmental protein</keyword>
<keyword id="KW-0221">Differentiation</keyword>
<keyword id="KW-1015">Disulfide bond</keyword>
<keyword id="KW-0297">G-protein coupled receptor</keyword>
<keyword id="KW-0306">Gastrulation</keyword>
<keyword id="KW-0325">Glycoprotein</keyword>
<keyword id="KW-0472">Membrane</keyword>
<keyword id="KW-0675">Receptor</keyword>
<keyword id="KW-1185">Reference proteome</keyword>
<keyword id="KW-0807">Transducer</keyword>
<keyword id="KW-0812">Transmembrane</keyword>
<keyword id="KW-1133">Transmembrane helix</keyword>
<feature type="chain" id="PRO_0000069177" description="Apelin receptor A">
    <location>
        <begin position="1"/>
        <end position="362"/>
    </location>
</feature>
<feature type="topological domain" description="Extracellular" evidence="4">
    <location>
        <begin position="1"/>
        <end position="37"/>
    </location>
</feature>
<feature type="transmembrane region" description="Helical; Name=1" evidence="4">
    <location>
        <begin position="38"/>
        <end position="58"/>
    </location>
</feature>
<feature type="topological domain" description="Cytoplasmic" evidence="4">
    <location>
        <begin position="59"/>
        <end position="76"/>
    </location>
</feature>
<feature type="transmembrane region" description="Helical; Name=2" evidence="4">
    <location>
        <begin position="77"/>
        <end position="97"/>
    </location>
</feature>
<feature type="topological domain" description="Extracellular" evidence="4">
    <location>
        <begin position="98"/>
        <end position="110"/>
    </location>
</feature>
<feature type="transmembrane region" description="Helical; Name=3" evidence="4">
    <location>
        <begin position="111"/>
        <end position="131"/>
    </location>
</feature>
<feature type="topological domain" description="Cytoplasmic" evidence="4">
    <location>
        <begin position="132"/>
        <end position="151"/>
    </location>
</feature>
<feature type="transmembrane region" description="Helical; Name=4" evidence="4">
    <location>
        <begin position="152"/>
        <end position="172"/>
    </location>
</feature>
<feature type="topological domain" description="Extracellular" evidence="4">
    <location>
        <begin position="173"/>
        <end position="199"/>
    </location>
</feature>
<feature type="transmembrane region" description="Helical; Name=5" evidence="4">
    <location>
        <begin position="200"/>
        <end position="220"/>
    </location>
</feature>
<feature type="topological domain" description="Cytoplasmic" evidence="4">
    <location>
        <begin position="221"/>
        <end position="248"/>
    </location>
</feature>
<feature type="transmembrane region" description="Helical; Name=6" evidence="4">
    <location>
        <begin position="249"/>
        <end position="269"/>
    </location>
</feature>
<feature type="topological domain" description="Extracellular" evidence="4">
    <location>
        <begin position="270"/>
        <end position="296"/>
    </location>
</feature>
<feature type="transmembrane region" description="Helical; Name=7" evidence="4">
    <location>
        <begin position="297"/>
        <end position="317"/>
    </location>
</feature>
<feature type="topological domain" description="Cytoplasmic" evidence="4">
    <location>
        <begin position="318"/>
        <end position="362"/>
    </location>
</feature>
<feature type="glycosylation site" description="N-linked (GlcNAc...) asparagine" evidence="4">
    <location>
        <position position="19"/>
    </location>
</feature>
<feature type="glycosylation site" description="N-linked (GlcNAc...) asparagine" evidence="4">
    <location>
        <position position="181"/>
    </location>
</feature>
<feature type="disulfide bond" evidence="1">
    <location>
        <begin position="26"/>
        <end position="286"/>
    </location>
</feature>
<feature type="disulfide bond" evidence="1">
    <location>
        <begin position="108"/>
        <end position="185"/>
    </location>
</feature>
<feature type="mutagenesis site" description="No phenotype when overexpressed." evidence="9">
    <original>D</original>
    <variation>N</variation>
    <location>
        <position position="81"/>
    </location>
</feature>
<feature type="sequence conflict" description="In Ref. 1; CAA63612." evidence="10" ref="1">
    <original>S</original>
    <variation>P</variation>
    <location>
        <position position="150"/>
    </location>
</feature>
<evidence type="ECO:0000250" key="1">
    <source>
        <dbReference type="UniProtKB" id="P35414"/>
    </source>
</evidence>
<evidence type="ECO:0000250" key="2">
    <source>
        <dbReference type="UniProtKB" id="Q7SZP9"/>
    </source>
</evidence>
<evidence type="ECO:0000250" key="3">
    <source>
        <dbReference type="UniProtKB" id="Q9WV08"/>
    </source>
</evidence>
<evidence type="ECO:0000255" key="4"/>
<evidence type="ECO:0000255" key="5">
    <source>
        <dbReference type="PROSITE-ProRule" id="PRU00521"/>
    </source>
</evidence>
<evidence type="ECO:0000269" key="6">
    <source>
    </source>
</evidence>
<evidence type="ECO:0000269" key="7">
    <source>
    </source>
</evidence>
<evidence type="ECO:0000269" key="8">
    <source>
    </source>
</evidence>
<evidence type="ECO:0000269" key="9">
    <source>
    </source>
</evidence>
<evidence type="ECO:0000305" key="10"/>
<reference key="1">
    <citation type="journal article" date="1996" name="Mech. Dev.">
        <title>Expression of a new G protein-coupled receptor X-msr is associated with an endothelial lineage in Xenopus laevis.</title>
        <authorList>
            <person name="Devic E."/>
            <person name="Paquereau L."/>
            <person name="Vernier P."/>
            <person name="Knibiehler B."/>
            <person name="Audigier Y."/>
        </authorList>
    </citation>
    <scope>NUCLEOTIDE SEQUENCE [MRNA]</scope>
    <scope>TISSUE SPECIFICITY</scope>
    <scope>DEVELOPMENTAL STAGE</scope>
    <scope>MUTAGENESIS OF ASP-81</scope>
    <source>
        <tissue>Gastrula</tissue>
    </source>
</reference>
<reference key="2">
    <citation type="submission" date="1996-09" db="EMBL/GenBank/DDBJ databases">
        <title>XAngio1, a novel Xenopus gene, is expressed in vascular precursor cells.</title>
        <authorList>
            <person name="Saha M.S."/>
            <person name="Oakes J.A."/>
            <person name="Miles R.R."/>
        </authorList>
    </citation>
    <scope>NUCLEOTIDE SEQUENCE [MRNA]</scope>
</reference>
<reference key="3">
    <citation type="journal article" date="2007" name="Dev. Biol.">
        <title>Paracrine and autocrine mechanisms of apelin signaling govern embryonic and tumor angiogenesis.</title>
        <authorList>
            <person name="Kaelin R.E."/>
            <person name="Kretz M.P."/>
            <person name="Meyer A.M."/>
            <person name="Kispert A."/>
            <person name="Heppner F.L."/>
            <person name="Braendli A.W."/>
        </authorList>
    </citation>
    <scope>NUCLEOTIDE SEQUENCE [MRNA]</scope>
    <scope>FUNCTION</scope>
    <scope>SUBCELLULAR LOCATION</scope>
    <scope>TISSUE SPECIFICITY</scope>
    <source>
        <tissue>Embryo</tissue>
    </source>
</reference>
<reference key="4">
    <citation type="submission" date="2007-04" db="EMBL/GenBank/DDBJ databases">
        <authorList>
            <consortium name="NIH - Xenopus Gene Collection (XGC) project"/>
        </authorList>
    </citation>
    <scope>NUCLEOTIDE SEQUENCE [LARGE SCALE MRNA]</scope>
    <source>
        <tissue>Neurula</tissue>
    </source>
</reference>
<reference key="5">
    <citation type="journal article" date="2006" name="Dev. Biol.">
        <title>Apelin, the ligand for the endothelial G-protein-coupled receptor, APJ, is a potent angiogenic factor required for normal vascular development of the frog embryo.</title>
        <authorList>
            <person name="Cox C.M."/>
            <person name="D'Agostino S.L."/>
            <person name="Miller M.K."/>
            <person name="Heimark R.L."/>
            <person name="Krieg P.A."/>
        </authorList>
    </citation>
    <scope>FUNCTION</scope>
    <scope>TISSUE SPECIFICITY</scope>
</reference>
<reference key="6">
    <citation type="journal article" date="2006" name="Dev. Biol.">
        <title>Xapelin and Xmsr are required for cardiovascular development in Xenopus laevis.</title>
        <authorList>
            <person name="Inui M."/>
            <person name="Fukui A."/>
            <person name="Ito Y."/>
            <person name="Asashima M."/>
        </authorList>
    </citation>
    <scope>FUNCTION</scope>
    <scope>TISSUE SPECIFICITY</scope>
</reference>
<proteinExistence type="evidence at protein level"/>
<accession>P79960</accession>
<accession>A1XP42</accession>
<accession>A4QNR6</accession>
<accession>P70058</accession>